<protein>
    <recommendedName>
        <fullName evidence="8">Transmembrane channel-like protein 8</fullName>
    </recommendedName>
    <alternativeName>
        <fullName>Epidermodysplasia verruciformis protein 2 homolog</fullName>
    </alternativeName>
</protein>
<gene>
    <name evidence="11" type="primary">Tmc8</name>
    <name evidence="7" type="synonym">Ever2</name>
</gene>
<accession>Q7TN58</accession>
<accession>Q3TAL0</accession>
<accession>Q3UWI0</accession>
<accession>Q7TQ67</accession>
<organism>
    <name type="scientific">Mus musculus</name>
    <name type="common">Mouse</name>
    <dbReference type="NCBI Taxonomy" id="10090"/>
    <lineage>
        <taxon>Eukaryota</taxon>
        <taxon>Metazoa</taxon>
        <taxon>Chordata</taxon>
        <taxon>Craniata</taxon>
        <taxon>Vertebrata</taxon>
        <taxon>Euteleostomi</taxon>
        <taxon>Mammalia</taxon>
        <taxon>Eutheria</taxon>
        <taxon>Euarchontoglires</taxon>
        <taxon>Glires</taxon>
        <taxon>Rodentia</taxon>
        <taxon>Myomorpha</taxon>
        <taxon>Muroidea</taxon>
        <taxon>Muridae</taxon>
        <taxon>Murinae</taxon>
        <taxon>Mus</taxon>
        <taxon>Mus</taxon>
    </lineage>
</organism>
<reference key="1">
    <citation type="journal article" date="2003" name="Genomics">
        <title>Characterization of the transmembrane channel-like (TMC) gene family: functional clues from hearing loss and epidermodysplasia verruciformis.</title>
        <authorList>
            <person name="Kurima K."/>
            <person name="Yang Y."/>
            <person name="Sorber K."/>
            <person name="Griffith A.J."/>
        </authorList>
    </citation>
    <scope>NUCLEOTIDE SEQUENCE [MRNA] (ISOFORM 1)</scope>
    <scope>TISSUE SPECIFICITY</scope>
</reference>
<reference key="2">
    <citation type="journal article" date="2003" name="BMC Genomics">
        <title>TMC and EVER genes belong to a larger novel family, the TMC gene family encoding transmembrane proteins.</title>
        <authorList>
            <person name="Keresztes G."/>
            <person name="Mutai H."/>
            <person name="Heller S."/>
        </authorList>
    </citation>
    <scope>NUCLEOTIDE SEQUENCE [MRNA] (ISOFORM 1)</scope>
    <scope>TISSUE SPECIFICITY</scope>
    <source>
        <strain>C57BL/6J</strain>
    </source>
</reference>
<reference key="3">
    <citation type="journal article" date="2005" name="Science">
        <title>The transcriptional landscape of the mammalian genome.</title>
        <authorList>
            <person name="Carninci P."/>
            <person name="Kasukawa T."/>
            <person name="Katayama S."/>
            <person name="Gough J."/>
            <person name="Frith M.C."/>
            <person name="Maeda N."/>
            <person name="Oyama R."/>
            <person name="Ravasi T."/>
            <person name="Lenhard B."/>
            <person name="Wells C."/>
            <person name="Kodzius R."/>
            <person name="Shimokawa K."/>
            <person name="Bajic V.B."/>
            <person name="Brenner S.E."/>
            <person name="Batalov S."/>
            <person name="Forrest A.R."/>
            <person name="Zavolan M."/>
            <person name="Davis M.J."/>
            <person name="Wilming L.G."/>
            <person name="Aidinis V."/>
            <person name="Allen J.E."/>
            <person name="Ambesi-Impiombato A."/>
            <person name="Apweiler R."/>
            <person name="Aturaliya R.N."/>
            <person name="Bailey T.L."/>
            <person name="Bansal M."/>
            <person name="Baxter L."/>
            <person name="Beisel K.W."/>
            <person name="Bersano T."/>
            <person name="Bono H."/>
            <person name="Chalk A.M."/>
            <person name="Chiu K.P."/>
            <person name="Choudhary V."/>
            <person name="Christoffels A."/>
            <person name="Clutterbuck D.R."/>
            <person name="Crowe M.L."/>
            <person name="Dalla E."/>
            <person name="Dalrymple B.P."/>
            <person name="de Bono B."/>
            <person name="Della Gatta G."/>
            <person name="di Bernardo D."/>
            <person name="Down T."/>
            <person name="Engstrom P."/>
            <person name="Fagiolini M."/>
            <person name="Faulkner G."/>
            <person name="Fletcher C.F."/>
            <person name="Fukushima T."/>
            <person name="Furuno M."/>
            <person name="Futaki S."/>
            <person name="Gariboldi M."/>
            <person name="Georgii-Hemming P."/>
            <person name="Gingeras T.R."/>
            <person name="Gojobori T."/>
            <person name="Green R.E."/>
            <person name="Gustincich S."/>
            <person name="Harbers M."/>
            <person name="Hayashi Y."/>
            <person name="Hensch T.K."/>
            <person name="Hirokawa N."/>
            <person name="Hill D."/>
            <person name="Huminiecki L."/>
            <person name="Iacono M."/>
            <person name="Ikeo K."/>
            <person name="Iwama A."/>
            <person name="Ishikawa T."/>
            <person name="Jakt M."/>
            <person name="Kanapin A."/>
            <person name="Katoh M."/>
            <person name="Kawasawa Y."/>
            <person name="Kelso J."/>
            <person name="Kitamura H."/>
            <person name="Kitano H."/>
            <person name="Kollias G."/>
            <person name="Krishnan S.P."/>
            <person name="Kruger A."/>
            <person name="Kummerfeld S.K."/>
            <person name="Kurochkin I.V."/>
            <person name="Lareau L.F."/>
            <person name="Lazarevic D."/>
            <person name="Lipovich L."/>
            <person name="Liu J."/>
            <person name="Liuni S."/>
            <person name="McWilliam S."/>
            <person name="Madan Babu M."/>
            <person name="Madera M."/>
            <person name="Marchionni L."/>
            <person name="Matsuda H."/>
            <person name="Matsuzawa S."/>
            <person name="Miki H."/>
            <person name="Mignone F."/>
            <person name="Miyake S."/>
            <person name="Morris K."/>
            <person name="Mottagui-Tabar S."/>
            <person name="Mulder N."/>
            <person name="Nakano N."/>
            <person name="Nakauchi H."/>
            <person name="Ng P."/>
            <person name="Nilsson R."/>
            <person name="Nishiguchi S."/>
            <person name="Nishikawa S."/>
            <person name="Nori F."/>
            <person name="Ohara O."/>
            <person name="Okazaki Y."/>
            <person name="Orlando V."/>
            <person name="Pang K.C."/>
            <person name="Pavan W.J."/>
            <person name="Pavesi G."/>
            <person name="Pesole G."/>
            <person name="Petrovsky N."/>
            <person name="Piazza S."/>
            <person name="Reed J."/>
            <person name="Reid J.F."/>
            <person name="Ring B.Z."/>
            <person name="Ringwald M."/>
            <person name="Rost B."/>
            <person name="Ruan Y."/>
            <person name="Salzberg S.L."/>
            <person name="Sandelin A."/>
            <person name="Schneider C."/>
            <person name="Schoenbach C."/>
            <person name="Sekiguchi K."/>
            <person name="Semple C.A."/>
            <person name="Seno S."/>
            <person name="Sessa L."/>
            <person name="Sheng Y."/>
            <person name="Shibata Y."/>
            <person name="Shimada H."/>
            <person name="Shimada K."/>
            <person name="Silva D."/>
            <person name="Sinclair B."/>
            <person name="Sperling S."/>
            <person name="Stupka E."/>
            <person name="Sugiura K."/>
            <person name="Sultana R."/>
            <person name="Takenaka Y."/>
            <person name="Taki K."/>
            <person name="Tammoja K."/>
            <person name="Tan S.L."/>
            <person name="Tang S."/>
            <person name="Taylor M.S."/>
            <person name="Tegner J."/>
            <person name="Teichmann S.A."/>
            <person name="Ueda H.R."/>
            <person name="van Nimwegen E."/>
            <person name="Verardo R."/>
            <person name="Wei C.L."/>
            <person name="Yagi K."/>
            <person name="Yamanishi H."/>
            <person name="Zabarovsky E."/>
            <person name="Zhu S."/>
            <person name="Zimmer A."/>
            <person name="Hide W."/>
            <person name="Bult C."/>
            <person name="Grimmond S.M."/>
            <person name="Teasdale R.D."/>
            <person name="Liu E.T."/>
            <person name="Brusic V."/>
            <person name="Quackenbush J."/>
            <person name="Wahlestedt C."/>
            <person name="Mattick J.S."/>
            <person name="Hume D.A."/>
            <person name="Kai C."/>
            <person name="Sasaki D."/>
            <person name="Tomaru Y."/>
            <person name="Fukuda S."/>
            <person name="Kanamori-Katayama M."/>
            <person name="Suzuki M."/>
            <person name="Aoki J."/>
            <person name="Arakawa T."/>
            <person name="Iida J."/>
            <person name="Imamura K."/>
            <person name="Itoh M."/>
            <person name="Kato T."/>
            <person name="Kawaji H."/>
            <person name="Kawagashira N."/>
            <person name="Kawashima T."/>
            <person name="Kojima M."/>
            <person name="Kondo S."/>
            <person name="Konno H."/>
            <person name="Nakano K."/>
            <person name="Ninomiya N."/>
            <person name="Nishio T."/>
            <person name="Okada M."/>
            <person name="Plessy C."/>
            <person name="Shibata K."/>
            <person name="Shiraki T."/>
            <person name="Suzuki S."/>
            <person name="Tagami M."/>
            <person name="Waki K."/>
            <person name="Watahiki A."/>
            <person name="Okamura-Oho Y."/>
            <person name="Suzuki H."/>
            <person name="Kawai J."/>
            <person name="Hayashizaki Y."/>
        </authorList>
    </citation>
    <scope>NUCLEOTIDE SEQUENCE [LARGE SCALE MRNA] (ISOFORM 2)</scope>
    <scope>NUCLEOTIDE SEQUENCE [LARGE SCALE MRNA] OF 457-722</scope>
    <source>
        <strain>C57BL/6J</strain>
        <tissue>Testis</tissue>
    </source>
</reference>
<reference key="4">
    <citation type="journal article" date="2007" name="Proc. Natl. Acad. Sci. U.S.A.">
        <title>Large-scale phosphorylation analysis of mouse liver.</title>
        <authorList>
            <person name="Villen J."/>
            <person name="Beausoleil S.A."/>
            <person name="Gerber S.A."/>
            <person name="Gygi S.P."/>
        </authorList>
    </citation>
    <scope>IDENTIFICATION BY MASS SPECTROMETRY [LARGE SCALE ANALYSIS]</scope>
    <source>
        <tissue>Liver</tissue>
    </source>
</reference>
<reference key="5">
    <citation type="journal article" date="2010" name="Cell">
        <title>A tissue-specific atlas of mouse protein phosphorylation and expression.</title>
        <authorList>
            <person name="Huttlin E.L."/>
            <person name="Jedrychowski M.P."/>
            <person name="Elias J.E."/>
            <person name="Goswami T."/>
            <person name="Rad R."/>
            <person name="Beausoleil S.A."/>
            <person name="Villen J."/>
            <person name="Haas W."/>
            <person name="Sowa M.E."/>
            <person name="Gygi S.P."/>
        </authorList>
    </citation>
    <scope>PHOSPHORYLATION [LARGE SCALE ANALYSIS] AT SER-6; SER-18; SER-658; SER-663; SER-673 AND SER-698</scope>
    <scope>IDENTIFICATION BY MASS SPECTROMETRY [LARGE SCALE ANALYSIS]</scope>
    <source>
        <tissue>Kidney</tissue>
        <tissue>Lung</tissue>
        <tissue>Spleen</tissue>
    </source>
</reference>
<reference key="6">
    <citation type="journal article" date="2020" name="J. Biol. Chem.">
        <title>Expression of a TMC6-TMC8-CIB1 heterotrimeric complex in lymphocytes is regulated by each of the components.</title>
        <authorList>
            <person name="Wu C.J."/>
            <person name="Li X."/>
            <person name="Sommers C.L."/>
            <person name="Kurima K."/>
            <person name="Huh S."/>
            <person name="Bugos G."/>
            <person name="Dong L."/>
            <person name="Li W."/>
            <person name="Griffith A.J."/>
            <person name="Samelson L.E."/>
        </authorList>
    </citation>
    <scope>FUNCTION</scope>
    <scope>INTERACTION WITH TMC6 AMD CIB1</scope>
    <scope>DISRUPTION PHENOTYPE</scope>
    <scope>TISSUE SPECIFICITY</scope>
</reference>
<feature type="chain" id="PRO_0000185387" description="Transmembrane channel-like protein 8">
    <location>
        <begin position="1"/>
        <end position="722"/>
    </location>
</feature>
<feature type="topological domain" description="Cytoplasmic" evidence="2">
    <location>
        <begin position="1"/>
        <end position="118"/>
    </location>
</feature>
<feature type="transmembrane region" description="Helical" evidence="2">
    <location>
        <begin position="119"/>
        <end position="139"/>
    </location>
</feature>
<feature type="topological domain" description="Lumenal" evidence="2">
    <location>
        <begin position="140"/>
        <end position="204"/>
    </location>
</feature>
<feature type="transmembrane region" description="Helical" evidence="2">
    <location>
        <begin position="205"/>
        <end position="225"/>
    </location>
</feature>
<feature type="topological domain" description="Cytoplasmic" evidence="2">
    <location>
        <begin position="226"/>
        <end position="307"/>
    </location>
</feature>
<feature type="transmembrane region" description="Helical" evidence="2">
    <location>
        <begin position="308"/>
        <end position="328"/>
    </location>
</feature>
<feature type="topological domain" description="Lumenal" evidence="2">
    <location>
        <begin position="329"/>
        <end position="375"/>
    </location>
</feature>
<feature type="transmembrane region" description="Helical" evidence="2">
    <location>
        <begin position="376"/>
        <end position="396"/>
    </location>
</feature>
<feature type="topological domain" description="Cytoplasmic" evidence="2">
    <location>
        <begin position="397"/>
        <end position="430"/>
    </location>
</feature>
<feature type="transmembrane region" description="Helical" evidence="2">
    <location>
        <begin position="431"/>
        <end position="451"/>
    </location>
</feature>
<feature type="topological domain" description="Lumenal" evidence="2">
    <location>
        <begin position="452"/>
        <end position="492"/>
    </location>
</feature>
<feature type="transmembrane region" description="Helical" evidence="2">
    <location>
        <begin position="493"/>
        <end position="513"/>
    </location>
</feature>
<feature type="topological domain" description="Cytoplasmic" evidence="2">
    <location>
        <begin position="514"/>
        <end position="536"/>
    </location>
</feature>
<feature type="transmembrane region" description="Helical" evidence="2">
    <location>
        <begin position="537"/>
        <end position="557"/>
    </location>
</feature>
<feature type="topological domain" description="Lumenal" evidence="2">
    <location>
        <begin position="558"/>
        <end position="598"/>
    </location>
</feature>
<feature type="transmembrane region" description="Helical" evidence="2">
    <location>
        <begin position="599"/>
        <end position="619"/>
    </location>
</feature>
<feature type="topological domain" description="Cytoplasmic" evidence="2">
    <location>
        <begin position="620"/>
        <end position="722"/>
    </location>
</feature>
<feature type="region of interest" description="Disordered" evidence="3">
    <location>
        <begin position="1"/>
        <end position="21"/>
    </location>
</feature>
<feature type="region of interest" description="TMC domain" evidence="1">
    <location>
        <begin position="366"/>
        <end position="534"/>
    </location>
</feature>
<feature type="region of interest" description="Disordered" evidence="3">
    <location>
        <begin position="658"/>
        <end position="722"/>
    </location>
</feature>
<feature type="compositionally biased region" description="Pro residues" evidence="3">
    <location>
        <begin position="678"/>
        <end position="687"/>
    </location>
</feature>
<feature type="compositionally biased region" description="Low complexity" evidence="3">
    <location>
        <begin position="689"/>
        <end position="712"/>
    </location>
</feature>
<feature type="modified residue" description="Phosphoserine" evidence="12">
    <location>
        <position position="6"/>
    </location>
</feature>
<feature type="modified residue" description="Phosphoserine" evidence="12">
    <location>
        <position position="18"/>
    </location>
</feature>
<feature type="modified residue" description="Phosphoserine" evidence="12">
    <location>
        <position position="658"/>
    </location>
</feature>
<feature type="modified residue" description="Phosphoserine" evidence="12">
    <location>
        <position position="663"/>
    </location>
</feature>
<feature type="modified residue" description="Phosphoserine" evidence="12">
    <location>
        <position position="673"/>
    </location>
</feature>
<feature type="modified residue" description="Phosphoserine" evidence="12">
    <location>
        <position position="698"/>
    </location>
</feature>
<feature type="glycosylation site" description="N-linked (GlcNAc...) asparagine" evidence="2">
    <location>
        <position position="184"/>
    </location>
</feature>
<feature type="glycosylation site" description="N-linked (GlcNAc...) asparagine" evidence="2">
    <location>
        <position position="375"/>
    </location>
</feature>
<feature type="glycosylation site" description="N-linked (GlcNAc...) asparagine" evidence="2">
    <location>
        <position position="571"/>
    </location>
</feature>
<feature type="splice variant" id="VSP_016451" description="In isoform 2." evidence="9">
    <original>R</original>
    <variation>TG</variation>
    <location>
        <position position="154"/>
    </location>
</feature>
<feature type="sequence conflict" description="In Ref. 3; BAE42658." evidence="10" ref="3">
    <original>T</original>
    <variation>A</variation>
    <location>
        <position position="179"/>
    </location>
</feature>
<feature type="sequence conflict" description="In Ref. 1; AAP69879." evidence="10" ref="1">
    <original>ME</original>
    <variation>VC</variation>
    <location>
        <begin position="277"/>
        <end position="278"/>
    </location>
</feature>
<proteinExistence type="evidence at protein level"/>
<evidence type="ECO:0000250" key="1">
    <source>
        <dbReference type="UniProtKB" id="Q8IU68"/>
    </source>
</evidence>
<evidence type="ECO:0000255" key="2"/>
<evidence type="ECO:0000256" key="3">
    <source>
        <dbReference type="SAM" id="MobiDB-lite"/>
    </source>
</evidence>
<evidence type="ECO:0000269" key="4">
    <source>
    </source>
</evidence>
<evidence type="ECO:0000269" key="5">
    <source>
    </source>
</evidence>
<evidence type="ECO:0000269" key="6">
    <source>
    </source>
</evidence>
<evidence type="ECO:0000303" key="7">
    <source>
    </source>
</evidence>
<evidence type="ECO:0000303" key="8">
    <source>
    </source>
</evidence>
<evidence type="ECO:0000303" key="9">
    <source>
    </source>
</evidence>
<evidence type="ECO:0000305" key="10"/>
<evidence type="ECO:0000312" key="11">
    <source>
        <dbReference type="MGI" id="MGI:2669037"/>
    </source>
</evidence>
<evidence type="ECO:0007744" key="12">
    <source>
    </source>
</evidence>
<name>TMC8_MOUSE</name>
<dbReference type="EMBL" id="AY236501">
    <property type="protein sequence ID" value="AAP69879.1"/>
    <property type="molecule type" value="mRNA"/>
</dbReference>
<dbReference type="EMBL" id="AY263160">
    <property type="protein sequence ID" value="AAP78775.1"/>
    <property type="molecule type" value="mRNA"/>
</dbReference>
<dbReference type="EMBL" id="AK136329">
    <property type="protein sequence ID" value="BAE22935.1"/>
    <property type="molecule type" value="mRNA"/>
</dbReference>
<dbReference type="EMBL" id="AK171772">
    <property type="protein sequence ID" value="BAE42658.1"/>
    <property type="molecule type" value="mRNA"/>
</dbReference>
<dbReference type="CCDS" id="CCDS25689.1">
    <molecule id="Q7TN58-1"/>
</dbReference>
<dbReference type="CCDS" id="CCDS56824.1">
    <molecule id="Q7TN58-2"/>
</dbReference>
<dbReference type="RefSeq" id="NP_001182018.1">
    <molecule id="Q7TN58-2"/>
    <property type="nucleotide sequence ID" value="NM_001195089.1"/>
</dbReference>
<dbReference type="RefSeq" id="NP_001182019.1">
    <property type="nucleotide sequence ID" value="NM_001195090.1"/>
</dbReference>
<dbReference type="RefSeq" id="NP_862904.1">
    <molecule id="Q7TN58-1"/>
    <property type="nucleotide sequence ID" value="NM_181856.2"/>
</dbReference>
<dbReference type="RefSeq" id="XP_006533186.1">
    <molecule id="Q7TN58-2"/>
    <property type="nucleotide sequence ID" value="XM_006533123.5"/>
</dbReference>
<dbReference type="RefSeq" id="XP_006533187.1">
    <property type="nucleotide sequence ID" value="XM_006533124.3"/>
</dbReference>
<dbReference type="RefSeq" id="XP_030101769.1">
    <molecule id="Q7TN58-1"/>
    <property type="nucleotide sequence ID" value="XM_030245909.1"/>
</dbReference>
<dbReference type="SMR" id="Q7TN58"/>
<dbReference type="BioGRID" id="229899">
    <property type="interactions" value="1"/>
</dbReference>
<dbReference type="FunCoup" id="Q7TN58">
    <property type="interactions" value="440"/>
</dbReference>
<dbReference type="STRING" id="10090.ENSMUSP00000113628"/>
<dbReference type="TCDB" id="1.A.17.4.2">
    <property type="family name" value="the calcium-dependent chloride channel (ca-clc) family"/>
</dbReference>
<dbReference type="GlyCosmos" id="Q7TN58">
    <property type="glycosylation" value="3 sites, No reported glycans"/>
</dbReference>
<dbReference type="GlyGen" id="Q7TN58">
    <property type="glycosylation" value="3 sites"/>
</dbReference>
<dbReference type="iPTMnet" id="Q7TN58"/>
<dbReference type="PhosphoSitePlus" id="Q7TN58"/>
<dbReference type="jPOST" id="Q7TN58"/>
<dbReference type="PaxDb" id="10090-ENSMUSP00000101941"/>
<dbReference type="ProteomicsDB" id="259248">
    <molecule id="Q7TN58-1"/>
</dbReference>
<dbReference type="ProteomicsDB" id="259249">
    <molecule id="Q7TN58-2"/>
</dbReference>
<dbReference type="Antibodypedia" id="32534">
    <property type="antibodies" value="193 antibodies from 28 providers"/>
</dbReference>
<dbReference type="DNASU" id="217356"/>
<dbReference type="Ensembl" id="ENSMUST00000050874.14">
    <molecule id="Q7TN58-1"/>
    <property type="protein sequence ID" value="ENSMUSP00000051878.8"/>
    <property type="gene ID" value="ENSMUSG00000050106.19"/>
</dbReference>
<dbReference type="Ensembl" id="ENSMUST00000106334.9">
    <molecule id="Q7TN58-2"/>
    <property type="protein sequence ID" value="ENSMUSP00000101941.3"/>
    <property type="gene ID" value="ENSMUSG00000050106.19"/>
</dbReference>
<dbReference type="Ensembl" id="ENSMUST00000119455.2">
    <molecule id="Q7TN58-2"/>
    <property type="protein sequence ID" value="ENSMUSP00000113628.2"/>
    <property type="gene ID" value="ENSMUSG00000050106.19"/>
</dbReference>
<dbReference type="GeneID" id="217356"/>
<dbReference type="KEGG" id="mmu:217356"/>
<dbReference type="UCSC" id="uc007mns.2">
    <molecule id="Q7TN58-1"/>
    <property type="organism name" value="mouse"/>
</dbReference>
<dbReference type="AGR" id="MGI:2669037"/>
<dbReference type="CTD" id="147138"/>
<dbReference type="MGI" id="MGI:2669037">
    <property type="gene designation" value="Tmc8"/>
</dbReference>
<dbReference type="VEuPathDB" id="HostDB:ENSMUSG00000050106"/>
<dbReference type="eggNOG" id="ENOG502RKT7">
    <property type="taxonomic scope" value="Eukaryota"/>
</dbReference>
<dbReference type="GeneTree" id="ENSGT01050000244894"/>
<dbReference type="HOGENOM" id="CLU_013958_3_1_1"/>
<dbReference type="InParanoid" id="Q7TN58"/>
<dbReference type="OMA" id="KKYTLMR"/>
<dbReference type="OrthoDB" id="1936208at2759"/>
<dbReference type="TreeFam" id="TF313462"/>
<dbReference type="BioGRID-ORCS" id="217356">
    <property type="hits" value="6 hits in 79 CRISPR screens"/>
</dbReference>
<dbReference type="ChiTaRS" id="Tmc8">
    <property type="organism name" value="mouse"/>
</dbReference>
<dbReference type="PRO" id="PR:Q7TN58"/>
<dbReference type="Proteomes" id="UP000000589">
    <property type="component" value="Chromosome 11"/>
</dbReference>
<dbReference type="RNAct" id="Q7TN58">
    <property type="molecule type" value="protein"/>
</dbReference>
<dbReference type="Bgee" id="ENSMUSG00000050106">
    <property type="expression patterns" value="Expressed in granulocyte and 63 other cell types or tissues"/>
</dbReference>
<dbReference type="ExpressionAtlas" id="Q7TN58">
    <property type="expression patterns" value="baseline and differential"/>
</dbReference>
<dbReference type="GO" id="GO:0005789">
    <property type="term" value="C:endoplasmic reticulum membrane"/>
    <property type="evidence" value="ECO:0007669"/>
    <property type="project" value="UniProtKB-SubCell"/>
</dbReference>
<dbReference type="GO" id="GO:0000139">
    <property type="term" value="C:Golgi membrane"/>
    <property type="evidence" value="ECO:0007669"/>
    <property type="project" value="UniProtKB-SubCell"/>
</dbReference>
<dbReference type="GO" id="GO:0031965">
    <property type="term" value="C:nuclear membrane"/>
    <property type="evidence" value="ECO:0007669"/>
    <property type="project" value="UniProtKB-SubCell"/>
</dbReference>
<dbReference type="GO" id="GO:0005886">
    <property type="term" value="C:plasma membrane"/>
    <property type="evidence" value="ECO:0007669"/>
    <property type="project" value="InterPro"/>
</dbReference>
<dbReference type="GO" id="GO:0140311">
    <property type="term" value="F:protein sequestering activity"/>
    <property type="evidence" value="ECO:0007669"/>
    <property type="project" value="Ensembl"/>
</dbReference>
<dbReference type="GO" id="GO:0043120">
    <property type="term" value="F:tumor necrosis factor binding"/>
    <property type="evidence" value="ECO:0007669"/>
    <property type="project" value="Ensembl"/>
</dbReference>
<dbReference type="GO" id="GO:0006882">
    <property type="term" value="P:intracellular zinc ion homeostasis"/>
    <property type="evidence" value="ECO:0000250"/>
    <property type="project" value="UniProtKB"/>
</dbReference>
<dbReference type="GO" id="GO:0043124">
    <property type="term" value="P:negative regulation of canonical NF-kappaB signal transduction"/>
    <property type="evidence" value="ECO:0007669"/>
    <property type="project" value="Ensembl"/>
</dbReference>
<dbReference type="GO" id="GO:0031333">
    <property type="term" value="P:negative regulation of protein-containing complex assembly"/>
    <property type="evidence" value="ECO:0007669"/>
    <property type="project" value="Ensembl"/>
</dbReference>
<dbReference type="GO" id="GO:0043065">
    <property type="term" value="P:positive regulation of apoptotic process"/>
    <property type="evidence" value="ECO:0000250"/>
    <property type="project" value="UniProtKB"/>
</dbReference>
<dbReference type="GO" id="GO:0050821">
    <property type="term" value="P:protein stabilization"/>
    <property type="evidence" value="ECO:0000315"/>
    <property type="project" value="UniProtKB"/>
</dbReference>
<dbReference type="GO" id="GO:1902041">
    <property type="term" value="P:regulation of extrinsic apoptotic signaling pathway via death domain receptors"/>
    <property type="evidence" value="ECO:0007669"/>
    <property type="project" value="Ensembl"/>
</dbReference>
<dbReference type="GO" id="GO:0010803">
    <property type="term" value="P:regulation of tumor necrosis factor-mediated signaling pathway"/>
    <property type="evidence" value="ECO:0007669"/>
    <property type="project" value="Ensembl"/>
</dbReference>
<dbReference type="InterPro" id="IPR038900">
    <property type="entry name" value="TMC"/>
</dbReference>
<dbReference type="InterPro" id="IPR012496">
    <property type="entry name" value="TMC_dom"/>
</dbReference>
<dbReference type="PANTHER" id="PTHR23302:SF39">
    <property type="entry name" value="TRANSMEMBRANE CHANNEL-LIKE PROTEIN 8"/>
    <property type="match status" value="1"/>
</dbReference>
<dbReference type="PANTHER" id="PTHR23302">
    <property type="entry name" value="TRANSMEMBRANE CHANNEL-RELATED"/>
    <property type="match status" value="1"/>
</dbReference>
<dbReference type="Pfam" id="PF07810">
    <property type="entry name" value="TMC"/>
    <property type="match status" value="1"/>
</dbReference>
<comment type="function">
    <text evidence="1 6">Acts as a regulatory protein involved in the regulation of numerous cellular processes (PubMed:32917726). Together with its homolog TMC6/EVER1, forms a complex with calcium-binding protein CIB1 in lymphocytes and keratynocytes where TMC6 and TMC8 stabilize CIB1 levels and reciprocally (PubMed:32917726). Together with TMC6, also forms a complex with and activates zinc transporter ZNT1 at the ER membrane of keratynocytes, thereby facilitating zinc uptake into the ER (By similarity). Also inhibits receptor-mediated calcium release from ER stores and calcium activated and volume regulated chloride channels (By similarity). Down-regulates the activity of transcription factors induced by zinc and cytokines (By similarity). Also sequesters TRADD which impairs the recruitment of TRAF2 and RIPK1 in the pro-survival complex I and promotes proapoptotic complex II formation, and may therefore be involved in TNF-induced cell death/survival decisions (By similarity).</text>
</comment>
<comment type="subunit">
    <text evidence="1 6">Interacts with TMC6 (PubMed:32917726). Interacts and forms a complex with TMC6 and CIB1; the interaction stabilizes each component of the complex (PubMed:32917726). Interacts and forms a complex with TMC6 and SLC30A1/ZNT1; the interaction regulates zinc transport into the ER (By similarity). Interacts with TRADD; the interaction competes with TRADD/RIPK1/TRAF2/cIAPs complex I formation and facilites complex II formation (By similarity).</text>
</comment>
<comment type="subcellular location">
    <subcellularLocation>
        <location evidence="1">Endoplasmic reticulum membrane</location>
        <topology evidence="2">Multi-pass membrane protein</topology>
    </subcellularLocation>
    <subcellularLocation>
        <location evidence="1">Golgi apparatus membrane</location>
        <topology evidence="2">Multi-pass membrane protein</topology>
    </subcellularLocation>
    <subcellularLocation>
        <location evidence="1">Nucleus membrane</location>
        <topology evidence="2">Multi-pass membrane protein</topology>
    </subcellularLocation>
</comment>
<comment type="alternative products">
    <event type="alternative splicing"/>
    <isoform>
        <id>Q7TN58-1</id>
        <name>1</name>
        <sequence type="displayed"/>
    </isoform>
    <isoform>
        <id>Q7TN58-2</id>
        <name>2</name>
        <sequence type="described" ref="VSP_016451"/>
    </isoform>
</comment>
<comment type="tissue specificity">
    <text evidence="4 5 6">Expressed in thymus, lung, prostate, placenta, testis and spleen. Expressed in lymphocytes and peripheral lymphocytes (PubMed:32917726).</text>
</comment>
<comment type="domain">
    <text evidence="1">The TMC domain mediates the interaction with SLC30A1/ZNT1.</text>
</comment>
<comment type="disruption phenotype">
    <text evidence="6">Knockout mice breed and grow normally (PubMed:32917726). No major defect in T cell subset numbers or function (PubMed:32917726). Decrease in CIB1 protein level in thymocytes and lymph node cells (PubMed:32917726).</text>
</comment>
<comment type="similarity">
    <text evidence="10">Belongs to the TMC family.</text>
</comment>
<keyword id="KW-0025">Alternative splicing</keyword>
<keyword id="KW-0256">Endoplasmic reticulum</keyword>
<keyword id="KW-0325">Glycoprotein</keyword>
<keyword id="KW-0333">Golgi apparatus</keyword>
<keyword id="KW-0472">Membrane</keyword>
<keyword id="KW-0539">Nucleus</keyword>
<keyword id="KW-0597">Phosphoprotein</keyword>
<keyword id="KW-1185">Reference proteome</keyword>
<keyword id="KW-0812">Transmembrane</keyword>
<keyword id="KW-1133">Transmembrane helix</keyword>
<sequence length="722" mass="82329">MFRQWSVQSGPAPRRPESQAASEELWEQEVERLCASRTPVRMLPYAMADKRFIRELREPEGVKTTFWQRWHRPRRVARQHLREAEQRLARGFGLWEGALYEIGGLFGTGIQSYFTFLRFLLLLNLLTMLLTACFVLLPLVWLRPPELGPALKLRLQCSSSPLPQSDIPRFHNPLWNILTGRAFNNTYLFYGAYRAGPESSSEYSIRLAYLLSPMVCLLLCFCGILQRMAEGLPQQTLLGQRYRTPLSAKVFSSWDFCIRVWEAATIKKHEISNELKMELEEGRRVELAQQQTRAQKACRLLTYLRTNILIVLLVVGAISAIFWATKYSQDNKEESLFLVLQYLPPGVISLVNFLGPQLFTVLIQLENYPPGTEVNLTLIWCVVLKLASLGMFSFSLGQTVLCIGRNKTSCESYGYNACDYQCWENSVGEELYKLIIFNFLLTVAFAFLVSLPRRLLVERFSGWFWTWLDREEFLVPKNVLDIVAAQTVTWMGLFYCPLLPLLNSVFLFLTFYIKKYTLLRNSRASPRRFRASSSTFFFHLVLLLGLLLAAVPLAYVISSTHSSWDCGLFTNYSAPWQVVPELVALQLPLPSQRALRYLSSHAFSFPLLILLSIVLTVCISQSRANARAIQGLRKQLVWQVQEKWHLVDDLSRLLPELSPEPGSPHSRASRPRSFCPGFPCPGSPGPRTPRLAPSNRLSSSSLGAPSASVPASRFHFPSRTEL</sequence>